<keyword id="KW-0106">Calcium</keyword>
<keyword id="KW-0119">Carbohydrate metabolism</keyword>
<keyword id="KW-0961">Cell wall biogenesis/degradation</keyword>
<keyword id="KW-0456">Lyase</keyword>
<keyword id="KW-0624">Polysaccharide degradation</keyword>
<keyword id="KW-0964">Secreted</keyword>
<keyword id="KW-0732">Signal</keyword>
<feature type="signal peptide" evidence="2">
    <location>
        <begin position="1"/>
        <end position="17"/>
    </location>
</feature>
<feature type="chain" id="PRO_0000394582" description="Probable pectate lyase E">
    <location>
        <begin position="18"/>
        <end position="257"/>
    </location>
</feature>
<protein>
    <recommendedName>
        <fullName>Probable pectate lyase E</fullName>
        <ecNumber>4.2.2.2</ecNumber>
    </recommendedName>
</protein>
<accession>B8NX10</accession>
<gene>
    <name type="primary">plyE</name>
    <name type="ORF">AFLA_121970</name>
</gene>
<reference key="1">
    <citation type="journal article" date="2015" name="Genome Announc.">
        <title>Genome sequence of Aspergillus flavus NRRL 3357, a strain that causes aflatoxin contamination of food and feed.</title>
        <authorList>
            <person name="Nierman W.C."/>
            <person name="Yu J."/>
            <person name="Fedorova-Abrams N.D."/>
            <person name="Losada L."/>
            <person name="Cleveland T.E."/>
            <person name="Bhatnagar D."/>
            <person name="Bennett J.W."/>
            <person name="Dean R."/>
            <person name="Payne G.A."/>
        </authorList>
    </citation>
    <scope>NUCLEOTIDE SEQUENCE [LARGE SCALE GENOMIC DNA]</scope>
    <source>
        <strain>ATCC 200026 / FGSC A1120 / IAM 13836 / NRRL 3357 / JCM 12722 / SRRC 167</strain>
    </source>
</reference>
<organism>
    <name type="scientific">Aspergillus flavus (strain ATCC 200026 / FGSC A1120 / IAM 13836 / NRRL 3357 / JCM 12722 / SRRC 167)</name>
    <dbReference type="NCBI Taxonomy" id="332952"/>
    <lineage>
        <taxon>Eukaryota</taxon>
        <taxon>Fungi</taxon>
        <taxon>Dikarya</taxon>
        <taxon>Ascomycota</taxon>
        <taxon>Pezizomycotina</taxon>
        <taxon>Eurotiomycetes</taxon>
        <taxon>Eurotiomycetidae</taxon>
        <taxon>Eurotiales</taxon>
        <taxon>Aspergillaceae</taxon>
        <taxon>Aspergillus</taxon>
        <taxon>Aspergillus subgen. Circumdati</taxon>
    </lineage>
</organism>
<proteinExistence type="inferred from homology"/>
<dbReference type="EC" id="4.2.2.2"/>
<dbReference type="EMBL" id="EQ963485">
    <property type="protein sequence ID" value="EED45968.1"/>
    <property type="molecule type" value="Genomic_DNA"/>
</dbReference>
<dbReference type="RefSeq" id="XP_002384904.1">
    <property type="nucleotide sequence ID" value="XM_002384863.1"/>
</dbReference>
<dbReference type="SMR" id="B8NX10"/>
<dbReference type="STRING" id="332952.B8NX10"/>
<dbReference type="EnsemblFungi" id="EED45968">
    <property type="protein sequence ID" value="EED45968"/>
    <property type="gene ID" value="AFLA_121970"/>
</dbReference>
<dbReference type="VEuPathDB" id="FungiDB:AFLA_014206"/>
<dbReference type="eggNOG" id="ENOG502QU39">
    <property type="taxonomic scope" value="Eukaryota"/>
</dbReference>
<dbReference type="HOGENOM" id="CLU_044863_3_1_1"/>
<dbReference type="OMA" id="KCTGQVE"/>
<dbReference type="GO" id="GO:0005576">
    <property type="term" value="C:extracellular region"/>
    <property type="evidence" value="ECO:0007669"/>
    <property type="project" value="UniProtKB-SubCell"/>
</dbReference>
<dbReference type="GO" id="GO:0030570">
    <property type="term" value="F:pectate lyase activity"/>
    <property type="evidence" value="ECO:0007669"/>
    <property type="project" value="UniProtKB-EC"/>
</dbReference>
<dbReference type="GO" id="GO:0071555">
    <property type="term" value="P:cell wall organization"/>
    <property type="evidence" value="ECO:0007669"/>
    <property type="project" value="UniProtKB-KW"/>
</dbReference>
<dbReference type="GO" id="GO:0045490">
    <property type="term" value="P:pectin catabolic process"/>
    <property type="evidence" value="ECO:0007669"/>
    <property type="project" value="TreeGrafter"/>
</dbReference>
<dbReference type="Gene3D" id="2.160.20.10">
    <property type="entry name" value="Single-stranded right-handed beta-helix, Pectin lyase-like"/>
    <property type="match status" value="1"/>
</dbReference>
<dbReference type="InterPro" id="IPR004898">
    <property type="entry name" value="Pectate_lyase_PlyH/PlyE-like"/>
</dbReference>
<dbReference type="InterPro" id="IPR012334">
    <property type="entry name" value="Pectin_lyas_fold"/>
</dbReference>
<dbReference type="InterPro" id="IPR011050">
    <property type="entry name" value="Pectin_lyase_fold/virulence"/>
</dbReference>
<dbReference type="PANTHER" id="PTHR33407:SF8">
    <property type="entry name" value="PECTATE LYASE E"/>
    <property type="match status" value="1"/>
</dbReference>
<dbReference type="PANTHER" id="PTHR33407">
    <property type="entry name" value="PECTATE LYASE F-RELATED"/>
    <property type="match status" value="1"/>
</dbReference>
<dbReference type="Pfam" id="PF03211">
    <property type="entry name" value="Pectate_lyase"/>
    <property type="match status" value="1"/>
</dbReference>
<dbReference type="SUPFAM" id="SSF51126">
    <property type="entry name" value="Pectin lyase-like"/>
    <property type="match status" value="1"/>
</dbReference>
<evidence type="ECO:0000250" key="1"/>
<evidence type="ECO:0000255" key="2"/>
<evidence type="ECO:0000305" key="3"/>
<name>PLYE_ASPFN</name>
<sequence>MYQKLLLVPLLLTSALASPHDASSHQKFHQLNERAAFPIPASKGSQTFKEPYYVKGTYDGGMKTFGRGVKCTGQKEGGDKDAVFIVADGGILRNAIIGADQIEGVHCEGSCTIENVWWQEVCEDALTFKGTGTGVHKVIGGGAQGADDKVIQHNSGGSAIIQDFTVQNFGKLYRSCGNCKKQFKRTVQISGVKASNGKTLVGINPNLGDSATIDGCASSVKEICVEYEGTDNNGKEPKKAHSGPSNTCKFKEPLASC</sequence>
<comment type="function">
    <text evidence="1">Pectinolytic enzyme consist of four classes of enzymes: pectin lyase, polygalacturonase, pectin methylesterase and rhamnogalacturonase. Among pectinolytic enzymes, pectin lyase is the most important in depolymerization of pectin, since it cleaves internal glycosidic bonds of highly methylated pectins. Favors pectate, the anion, over pectin, the methyl ester (By similarity).</text>
</comment>
<comment type="catalytic activity">
    <reaction>
        <text>Eliminative cleavage of (1-&gt;4)-alpha-D-galacturonan to give oligosaccharides with 4-deoxy-alpha-D-galact-4-enuronosyl groups at their non-reducing ends.</text>
        <dbReference type="EC" id="4.2.2.2"/>
    </reaction>
</comment>
<comment type="cofactor">
    <cofactor evidence="1">
        <name>Ca(2+)</name>
        <dbReference type="ChEBI" id="CHEBI:29108"/>
    </cofactor>
    <text evidence="1">Binds 1 Ca(2+) ion per subunit.</text>
</comment>
<comment type="subcellular location">
    <subcellularLocation>
        <location evidence="1">Secreted</location>
    </subcellularLocation>
</comment>
<comment type="similarity">
    <text evidence="3">Belongs to the polysaccharide lyase 3 family.</text>
</comment>